<feature type="chain" id="PRO_0000121731" description="Protection of telomeres protein 1">
    <location>
        <begin position="1"/>
        <end position="778"/>
    </location>
</feature>
<accession>P62597</accession>
<protein>
    <recommendedName>
        <fullName>Protection of telomeres protein 1</fullName>
        <shortName>cPot1</shortName>
    </recommendedName>
    <alternativeName>
        <fullName>POT1-like telomere end-binding protein</fullName>
    </alternativeName>
</protein>
<reference key="1">
    <citation type="journal article" date="2004" name="Mol. Cell. Biol.">
        <title>Cell cycle localization, dimerization, and binding domain architecture of the telomere protein cPot1.</title>
        <authorList>
            <person name="Wei C."/>
            <person name="Price C.M."/>
        </authorList>
    </citation>
    <scope>NUCLEOTIDE SEQUENCE [MRNA]</scope>
    <scope>SUBCELLULAR LOCATION</scope>
    <scope>SUBUNIT</scope>
    <scope>SINGLE-STRANDED TELOMERE DNA-BINDING</scope>
    <source>
        <tissue>Embryonic fibroblast</tissue>
    </source>
</reference>
<proteinExistence type="evidence at protein level"/>
<keyword id="KW-0158">Chromosome</keyword>
<keyword id="KW-0238">DNA-binding</keyword>
<keyword id="KW-0539">Nucleus</keyword>
<keyword id="KW-1185">Reference proteome</keyword>
<keyword id="KW-0779">Telomere</keyword>
<gene>
    <name type="primary">POT1</name>
</gene>
<sequence>MPVQVLKIIKGKPETQLPSHLQREDLKHLQTGLDHTNKYFQGIVILSYPLTKLGDGTDFFKIVLQDDTCSRINSINVLMYGKMAEDCAKLIRNGDTFIVAGFKVAESPTAREDGRHACHLQVSEESGSAIFICTQPSITPFSEATSPSVAPKYVYTPLNCLKDGTVVNLYGIVKFFKPPYISKGTDYCSVVTLVDQSNVKLTCTLFNGNLDSLPKIYKNGDIVRFHRVKIREYNGQMQGITSAGFASLTFDGTVGAPVVPRASSKVYTFVDEEQKTVEELRIWAASNLSVSGPEAKLSDVKPMMFFDLTCQLVGKAKVDGSSFLLKVWDGTKCPYPTWKVPVEAKELEGDRVLLHHLRNLTVDVLVYDNHVQLAKSLKTGSFLRIYSIHTKQASAKNEDMSSHIEFHLHGGTCYGRGIGILPENNPDVEELKSFLECVELTDSQNMESVSSLELGDTFDSYTDLESPLQRCQQLSATVLTDHQDMSNTVLKTVLNSSAPQQYRIRAKLRSFKPQKLYQSVKLHCSKCNTLQEVPNGDAIDFILQGCAATAPNPELQSMSWYESVVWTTEEDQGRKITIHFVKHYEMLQRPENTLLMIEGGTLKEIWKLTRRFKCVIPVKSKEDDLELLDLSAPFLLQGNIKYYGCKKCSTPKSIKNLSSLAEKREPSWEPTEIAQVLGIEPLQYVFVMKFTLVDGTGVLNAYLFDYEKFFQIPASEILTNSFLQQKMEMTMNTLSPPGRKLDDLPWLECFIKSYNVADGMKHQVYYQIFDTTVAEDVV</sequence>
<organism>
    <name type="scientific">Gallus gallus</name>
    <name type="common">Chicken</name>
    <dbReference type="NCBI Taxonomy" id="9031"/>
    <lineage>
        <taxon>Eukaryota</taxon>
        <taxon>Metazoa</taxon>
        <taxon>Chordata</taxon>
        <taxon>Craniata</taxon>
        <taxon>Vertebrata</taxon>
        <taxon>Euteleostomi</taxon>
        <taxon>Archelosauria</taxon>
        <taxon>Archosauria</taxon>
        <taxon>Dinosauria</taxon>
        <taxon>Saurischia</taxon>
        <taxon>Theropoda</taxon>
        <taxon>Coelurosauria</taxon>
        <taxon>Aves</taxon>
        <taxon>Neognathae</taxon>
        <taxon>Galloanserae</taxon>
        <taxon>Galliformes</taxon>
        <taxon>Phasianidae</taxon>
        <taxon>Phasianinae</taxon>
        <taxon>Gallus</taxon>
    </lineage>
</organism>
<comment type="function">
    <text evidence="1">Component of the telomerase ribonucleoprotein (RNP) complex that is essential for the replication of chromosome termini. Is a component of the double-stranded telomeric DNA-binding TRF1 complex that is involved in the regulation of telomere length by cis-inhibition of telomerase. Also acts as a single-stranded telomeric DNA-binding protein and thus may act as a downstream effector of the TRF1 complex and may transduce information about telomere maintenance and/or length to the telomere terminus. Binds to at least two telomeric single-stranded 5'-TTAGGG-3' repeats (G-strand). Its activity is TERT dependent but it does not increase TERT activity (By similarity).</text>
</comment>
<comment type="subunit">
    <text evidence="2">Homodimer or homooligomer. Component of the telomerase ribonucleoprotein complex. Binds single-stranded telomeric DNA as a monomer (By similarity). Found in a complex with TERF1, TINF2 and TNKS1. Interacts with TNKS1 (By similarity).</text>
</comment>
<comment type="subcellular location">
    <subcellularLocation>
        <location evidence="3">Nucleus</location>
    </subcellularLocation>
    <subcellularLocation>
        <location evidence="3">Chromosome</location>
        <location evidence="3">Telomere</location>
    </subcellularLocation>
    <text>Colocalizes with telomeric DNA.</text>
</comment>
<comment type="similarity">
    <text evidence="4">Belongs to the telombin family.</text>
</comment>
<dbReference type="EMBL" id="AY555718">
    <property type="protein sequence ID" value="AAS64745.1"/>
    <property type="molecule type" value="mRNA"/>
</dbReference>
<dbReference type="RefSeq" id="NP_996875.1">
    <property type="nucleotide sequence ID" value="NM_206992.1"/>
</dbReference>
<dbReference type="RefSeq" id="XP_046762938.1">
    <property type="nucleotide sequence ID" value="XM_046906982.1"/>
</dbReference>
<dbReference type="RefSeq" id="XP_046762939.1">
    <property type="nucleotide sequence ID" value="XM_046906983.1"/>
</dbReference>
<dbReference type="SMR" id="P62597"/>
<dbReference type="FunCoup" id="P62597">
    <property type="interactions" value="1900"/>
</dbReference>
<dbReference type="STRING" id="9031.ENSGALP00000030079"/>
<dbReference type="PaxDb" id="9031-ENSGALP00000030079"/>
<dbReference type="GeneID" id="404538"/>
<dbReference type="KEGG" id="gga:404538"/>
<dbReference type="CTD" id="25913"/>
<dbReference type="VEuPathDB" id="HostDB:geneid_404538"/>
<dbReference type="eggNOG" id="KOG4757">
    <property type="taxonomic scope" value="Eukaryota"/>
</dbReference>
<dbReference type="InParanoid" id="P62597"/>
<dbReference type="OrthoDB" id="2186770at2759"/>
<dbReference type="PhylomeDB" id="P62597"/>
<dbReference type="Reactome" id="R-GGA-418124">
    <property type="pathway name" value="Telomere maintenance"/>
</dbReference>
<dbReference type="PRO" id="PR:P62597"/>
<dbReference type="Proteomes" id="UP000000539">
    <property type="component" value="Unassembled WGS sequence"/>
</dbReference>
<dbReference type="GO" id="GO:0000781">
    <property type="term" value="C:chromosome, telomeric region"/>
    <property type="evidence" value="ECO:0000250"/>
    <property type="project" value="UniProtKB"/>
</dbReference>
<dbReference type="GO" id="GO:0000783">
    <property type="term" value="C:nuclear telomere cap complex"/>
    <property type="evidence" value="ECO:0000318"/>
    <property type="project" value="GO_Central"/>
</dbReference>
<dbReference type="GO" id="GO:0005654">
    <property type="term" value="C:nucleoplasm"/>
    <property type="evidence" value="ECO:0000304"/>
    <property type="project" value="Reactome"/>
</dbReference>
<dbReference type="GO" id="GO:0098505">
    <property type="term" value="F:G-rich strand telomeric DNA binding"/>
    <property type="evidence" value="ECO:0000318"/>
    <property type="project" value="GO_Central"/>
</dbReference>
<dbReference type="GO" id="GO:0043047">
    <property type="term" value="F:single-stranded telomeric DNA binding"/>
    <property type="evidence" value="ECO:0000250"/>
    <property type="project" value="UniProtKB"/>
</dbReference>
<dbReference type="GO" id="GO:0010521">
    <property type="term" value="F:telomerase inhibitor activity"/>
    <property type="evidence" value="ECO:0000318"/>
    <property type="project" value="GO_Central"/>
</dbReference>
<dbReference type="GO" id="GO:0042162">
    <property type="term" value="F:telomeric DNA binding"/>
    <property type="evidence" value="ECO:0000250"/>
    <property type="project" value="UniProtKB"/>
</dbReference>
<dbReference type="GO" id="GO:0032210">
    <property type="term" value="P:regulation of telomere maintenance via telomerase"/>
    <property type="evidence" value="ECO:0000318"/>
    <property type="project" value="GO_Central"/>
</dbReference>
<dbReference type="GO" id="GO:0016233">
    <property type="term" value="P:telomere capping"/>
    <property type="evidence" value="ECO:0000318"/>
    <property type="project" value="GO_Central"/>
</dbReference>
<dbReference type="GO" id="GO:0007004">
    <property type="term" value="P:telomere maintenance via telomerase"/>
    <property type="evidence" value="ECO:0000250"/>
    <property type="project" value="UniProtKB"/>
</dbReference>
<dbReference type="CDD" id="cd04497">
    <property type="entry name" value="hPOT1_OB1_like"/>
    <property type="match status" value="1"/>
</dbReference>
<dbReference type="CDD" id="cd04498">
    <property type="entry name" value="hPOT1_OB2"/>
    <property type="match status" value="1"/>
</dbReference>
<dbReference type="CDD" id="cd20374">
    <property type="entry name" value="Pot1C"/>
    <property type="match status" value="1"/>
</dbReference>
<dbReference type="FunFam" id="2.40.50.140:FF:000119">
    <property type="entry name" value="Protection of telomeres 1 homolog"/>
    <property type="match status" value="1"/>
</dbReference>
<dbReference type="FunFam" id="2.40.50.140:FF:000138">
    <property type="entry name" value="Protection of telomeres 1 homolog"/>
    <property type="match status" value="1"/>
</dbReference>
<dbReference type="Gene3D" id="2.40.50.140">
    <property type="entry name" value="Nucleic acid-binding proteins"/>
    <property type="match status" value="2"/>
</dbReference>
<dbReference type="InterPro" id="IPR012340">
    <property type="entry name" value="NA-bd_OB-fold"/>
</dbReference>
<dbReference type="InterPro" id="IPR028389">
    <property type="entry name" value="POT1"/>
</dbReference>
<dbReference type="InterPro" id="IPR048953">
    <property type="entry name" value="POT1_C_insert"/>
</dbReference>
<dbReference type="InterPro" id="IPR032042">
    <property type="entry name" value="POT1PC"/>
</dbReference>
<dbReference type="InterPro" id="IPR011564">
    <property type="entry name" value="Telomer_end-bd_POT1/Cdc13"/>
</dbReference>
<dbReference type="PANTHER" id="PTHR14513">
    <property type="entry name" value="PROTECTION OF TELOMERES 1"/>
    <property type="match status" value="1"/>
</dbReference>
<dbReference type="PANTHER" id="PTHR14513:SF0">
    <property type="entry name" value="PROTECTION OF TELOMERES PROTEIN 1"/>
    <property type="match status" value="1"/>
</dbReference>
<dbReference type="Pfam" id="PF02765">
    <property type="entry name" value="POT1"/>
    <property type="match status" value="1"/>
</dbReference>
<dbReference type="Pfam" id="PF21375">
    <property type="entry name" value="POT1_C_insert"/>
    <property type="match status" value="1"/>
</dbReference>
<dbReference type="Pfam" id="PF16686">
    <property type="entry name" value="POT1PC"/>
    <property type="match status" value="1"/>
</dbReference>
<dbReference type="SMART" id="SM00976">
    <property type="entry name" value="Telo_bind"/>
    <property type="match status" value="1"/>
</dbReference>
<dbReference type="SUPFAM" id="SSF50249">
    <property type="entry name" value="Nucleic acid-binding proteins"/>
    <property type="match status" value="2"/>
</dbReference>
<evidence type="ECO:0000250" key="1"/>
<evidence type="ECO:0000250" key="2">
    <source>
        <dbReference type="UniProtKB" id="Q9NUX5"/>
    </source>
</evidence>
<evidence type="ECO:0000269" key="3">
    <source>
    </source>
</evidence>
<evidence type="ECO:0000305" key="4"/>
<name>POTE1_CHICK</name>